<dbReference type="EC" id="2.8.1.4" evidence="1"/>
<dbReference type="EMBL" id="CP000802">
    <property type="protein sequence ID" value="ABV04880.1"/>
    <property type="molecule type" value="Genomic_DNA"/>
</dbReference>
<dbReference type="RefSeq" id="WP_000668690.1">
    <property type="nucleotide sequence ID" value="NC_009800.1"/>
</dbReference>
<dbReference type="SMR" id="A7ZX76"/>
<dbReference type="KEGG" id="ecx:EcHS_A0495"/>
<dbReference type="HOGENOM" id="CLU_037952_4_1_6"/>
<dbReference type="UniPathway" id="UPA00060"/>
<dbReference type="GO" id="GO:0005829">
    <property type="term" value="C:cytosol"/>
    <property type="evidence" value="ECO:0007669"/>
    <property type="project" value="TreeGrafter"/>
</dbReference>
<dbReference type="GO" id="GO:0005524">
    <property type="term" value="F:ATP binding"/>
    <property type="evidence" value="ECO:0007669"/>
    <property type="project" value="UniProtKB-UniRule"/>
</dbReference>
<dbReference type="GO" id="GO:0004810">
    <property type="term" value="F:CCA tRNA nucleotidyltransferase activity"/>
    <property type="evidence" value="ECO:0007669"/>
    <property type="project" value="InterPro"/>
</dbReference>
<dbReference type="GO" id="GO:0000049">
    <property type="term" value="F:tRNA binding"/>
    <property type="evidence" value="ECO:0007669"/>
    <property type="project" value="UniProtKB-UniRule"/>
</dbReference>
<dbReference type="GO" id="GO:0140741">
    <property type="term" value="F:tRNA-uracil-4 sulfurtransferase activity"/>
    <property type="evidence" value="ECO:0007669"/>
    <property type="project" value="UniProtKB-EC"/>
</dbReference>
<dbReference type="GO" id="GO:0009228">
    <property type="term" value="P:thiamine biosynthetic process"/>
    <property type="evidence" value="ECO:0007669"/>
    <property type="project" value="UniProtKB-KW"/>
</dbReference>
<dbReference type="GO" id="GO:0009229">
    <property type="term" value="P:thiamine diphosphate biosynthetic process"/>
    <property type="evidence" value="ECO:0007669"/>
    <property type="project" value="UniProtKB-UniRule"/>
</dbReference>
<dbReference type="GO" id="GO:0052837">
    <property type="term" value="P:thiazole biosynthetic process"/>
    <property type="evidence" value="ECO:0007669"/>
    <property type="project" value="InterPro"/>
</dbReference>
<dbReference type="GO" id="GO:0002937">
    <property type="term" value="P:tRNA 4-thiouridine biosynthesis"/>
    <property type="evidence" value="ECO:0007669"/>
    <property type="project" value="TreeGrafter"/>
</dbReference>
<dbReference type="CDD" id="cd01712">
    <property type="entry name" value="PPase_ThiI"/>
    <property type="match status" value="1"/>
</dbReference>
<dbReference type="CDD" id="cd00158">
    <property type="entry name" value="RHOD"/>
    <property type="match status" value="1"/>
</dbReference>
<dbReference type="CDD" id="cd11716">
    <property type="entry name" value="THUMP_ThiI"/>
    <property type="match status" value="1"/>
</dbReference>
<dbReference type="FunFam" id="3.30.2130.30:FF:000002">
    <property type="entry name" value="tRNA sulfurtransferase"/>
    <property type="match status" value="1"/>
</dbReference>
<dbReference type="FunFam" id="3.40.250.10:FF:000003">
    <property type="entry name" value="tRNA sulfurtransferase"/>
    <property type="match status" value="1"/>
</dbReference>
<dbReference type="FunFam" id="3.40.50.620:FF:000029">
    <property type="entry name" value="tRNA sulfurtransferase"/>
    <property type="match status" value="1"/>
</dbReference>
<dbReference type="Gene3D" id="3.30.2130.30">
    <property type="match status" value="1"/>
</dbReference>
<dbReference type="Gene3D" id="3.40.50.620">
    <property type="entry name" value="HUPs"/>
    <property type="match status" value="1"/>
</dbReference>
<dbReference type="Gene3D" id="3.40.250.10">
    <property type="entry name" value="Rhodanese-like domain"/>
    <property type="match status" value="1"/>
</dbReference>
<dbReference type="HAMAP" id="MF_00021">
    <property type="entry name" value="ThiI"/>
    <property type="match status" value="1"/>
</dbReference>
<dbReference type="InterPro" id="IPR001763">
    <property type="entry name" value="Rhodanese-like_dom"/>
</dbReference>
<dbReference type="InterPro" id="IPR036873">
    <property type="entry name" value="Rhodanese-like_dom_sf"/>
</dbReference>
<dbReference type="InterPro" id="IPR014729">
    <property type="entry name" value="Rossmann-like_a/b/a_fold"/>
</dbReference>
<dbReference type="InterPro" id="IPR020536">
    <property type="entry name" value="ThiI_AANH"/>
</dbReference>
<dbReference type="InterPro" id="IPR054173">
    <property type="entry name" value="ThiI_fer"/>
</dbReference>
<dbReference type="InterPro" id="IPR049961">
    <property type="entry name" value="ThiI_N"/>
</dbReference>
<dbReference type="InterPro" id="IPR026340">
    <property type="entry name" value="THII_Thiazole_biosynth_dom"/>
</dbReference>
<dbReference type="InterPro" id="IPR004114">
    <property type="entry name" value="THUMP_dom"/>
</dbReference>
<dbReference type="InterPro" id="IPR049962">
    <property type="entry name" value="THUMP_ThiI"/>
</dbReference>
<dbReference type="InterPro" id="IPR003720">
    <property type="entry name" value="tRNA_STrfase"/>
</dbReference>
<dbReference type="InterPro" id="IPR050102">
    <property type="entry name" value="tRNA_sulfurtransferase_ThiI"/>
</dbReference>
<dbReference type="NCBIfam" id="TIGR04271">
    <property type="entry name" value="ThiI_C_thiazole"/>
    <property type="match status" value="1"/>
</dbReference>
<dbReference type="NCBIfam" id="TIGR00342">
    <property type="entry name" value="tRNA uracil 4-sulfurtransferase ThiI"/>
    <property type="match status" value="1"/>
</dbReference>
<dbReference type="PANTHER" id="PTHR43209">
    <property type="entry name" value="TRNA SULFURTRANSFERASE"/>
    <property type="match status" value="1"/>
</dbReference>
<dbReference type="PANTHER" id="PTHR43209:SF1">
    <property type="entry name" value="TRNA SULFURTRANSFERASE"/>
    <property type="match status" value="1"/>
</dbReference>
<dbReference type="Pfam" id="PF02568">
    <property type="entry name" value="ThiI"/>
    <property type="match status" value="1"/>
</dbReference>
<dbReference type="Pfam" id="PF22025">
    <property type="entry name" value="ThiI_fer"/>
    <property type="match status" value="1"/>
</dbReference>
<dbReference type="Pfam" id="PF02926">
    <property type="entry name" value="THUMP"/>
    <property type="match status" value="1"/>
</dbReference>
<dbReference type="SMART" id="SM00981">
    <property type="entry name" value="THUMP"/>
    <property type="match status" value="1"/>
</dbReference>
<dbReference type="SUPFAM" id="SSF52402">
    <property type="entry name" value="Adenine nucleotide alpha hydrolases-like"/>
    <property type="match status" value="1"/>
</dbReference>
<dbReference type="SUPFAM" id="SSF52821">
    <property type="entry name" value="Rhodanese/Cell cycle control phosphatase"/>
    <property type="match status" value="1"/>
</dbReference>
<dbReference type="SUPFAM" id="SSF143437">
    <property type="entry name" value="THUMP domain-like"/>
    <property type="match status" value="1"/>
</dbReference>
<dbReference type="PROSITE" id="PS50206">
    <property type="entry name" value="RHODANESE_3"/>
    <property type="match status" value="1"/>
</dbReference>
<dbReference type="PROSITE" id="PS51165">
    <property type="entry name" value="THUMP"/>
    <property type="match status" value="1"/>
</dbReference>
<protein>
    <recommendedName>
        <fullName evidence="1">tRNA sulfurtransferase</fullName>
        <ecNumber evidence="1">2.8.1.4</ecNumber>
    </recommendedName>
    <alternativeName>
        <fullName evidence="1">Sulfur carrier protein ThiS sulfurtransferase</fullName>
    </alternativeName>
    <alternativeName>
        <fullName evidence="1">Thiamine biosynthesis protein ThiI</fullName>
    </alternativeName>
    <alternativeName>
        <fullName evidence="1">tRNA 4-thiouridine synthase</fullName>
    </alternativeName>
</protein>
<evidence type="ECO:0000255" key="1">
    <source>
        <dbReference type="HAMAP-Rule" id="MF_00021"/>
    </source>
</evidence>
<proteinExistence type="inferred from homology"/>
<gene>
    <name evidence="1" type="primary">thiI</name>
    <name type="ordered locus">EcHS_A0495</name>
</gene>
<keyword id="KW-0067">ATP-binding</keyword>
<keyword id="KW-0963">Cytoplasm</keyword>
<keyword id="KW-1015">Disulfide bond</keyword>
<keyword id="KW-0547">Nucleotide-binding</keyword>
<keyword id="KW-0676">Redox-active center</keyword>
<keyword id="KW-0694">RNA-binding</keyword>
<keyword id="KW-0784">Thiamine biosynthesis</keyword>
<keyword id="KW-0808">Transferase</keyword>
<keyword id="KW-0820">tRNA-binding</keyword>
<feature type="chain" id="PRO_1000074220" description="tRNA sulfurtransferase">
    <location>
        <begin position="1"/>
        <end position="482"/>
    </location>
</feature>
<feature type="domain" description="THUMP" evidence="1">
    <location>
        <begin position="61"/>
        <end position="165"/>
    </location>
</feature>
<feature type="domain" description="Rhodanese" evidence="1">
    <location>
        <begin position="404"/>
        <end position="482"/>
    </location>
</feature>
<feature type="active site" description="Cysteine persulfide intermediate" evidence="1">
    <location>
        <position position="456"/>
    </location>
</feature>
<feature type="binding site" evidence="1">
    <location>
        <begin position="183"/>
        <end position="184"/>
    </location>
    <ligand>
        <name>ATP</name>
        <dbReference type="ChEBI" id="CHEBI:30616"/>
    </ligand>
</feature>
<feature type="binding site" evidence="1">
    <location>
        <position position="265"/>
    </location>
    <ligand>
        <name>ATP</name>
        <dbReference type="ChEBI" id="CHEBI:30616"/>
    </ligand>
</feature>
<feature type="binding site" evidence="1">
    <location>
        <position position="287"/>
    </location>
    <ligand>
        <name>ATP</name>
        <dbReference type="ChEBI" id="CHEBI:30616"/>
    </ligand>
</feature>
<feature type="binding site" evidence="1">
    <location>
        <position position="296"/>
    </location>
    <ligand>
        <name>ATP</name>
        <dbReference type="ChEBI" id="CHEBI:30616"/>
    </ligand>
</feature>
<feature type="disulfide bond" description="Redox-active" evidence="1">
    <location>
        <begin position="344"/>
        <end position="456"/>
    </location>
</feature>
<reference key="1">
    <citation type="journal article" date="2008" name="J. Bacteriol.">
        <title>The pangenome structure of Escherichia coli: comparative genomic analysis of E. coli commensal and pathogenic isolates.</title>
        <authorList>
            <person name="Rasko D.A."/>
            <person name="Rosovitz M.J."/>
            <person name="Myers G.S.A."/>
            <person name="Mongodin E.F."/>
            <person name="Fricke W.F."/>
            <person name="Gajer P."/>
            <person name="Crabtree J."/>
            <person name="Sebaihia M."/>
            <person name="Thomson N.R."/>
            <person name="Chaudhuri R."/>
            <person name="Henderson I.R."/>
            <person name="Sperandio V."/>
            <person name="Ravel J."/>
        </authorList>
    </citation>
    <scope>NUCLEOTIDE SEQUENCE [LARGE SCALE GENOMIC DNA]</scope>
    <source>
        <strain>HS</strain>
    </source>
</reference>
<accession>A7ZX76</accession>
<comment type="function">
    <text evidence="1">Catalyzes the ATP-dependent transfer of a sulfur to tRNA to produce 4-thiouridine in position 8 of tRNAs, which functions as a near-UV photosensor. Also catalyzes the transfer of sulfur to the sulfur carrier protein ThiS, forming ThiS-thiocarboxylate. This is a step in the synthesis of thiazole, in the thiamine biosynthesis pathway. The sulfur is donated as persulfide by IscS.</text>
</comment>
<comment type="catalytic activity">
    <reaction evidence="1">
        <text>[ThiI sulfur-carrier protein]-S-sulfanyl-L-cysteine + a uridine in tRNA + 2 reduced [2Fe-2S]-[ferredoxin] + ATP + H(+) = [ThiI sulfur-carrier protein]-L-cysteine + a 4-thiouridine in tRNA + 2 oxidized [2Fe-2S]-[ferredoxin] + AMP + diphosphate</text>
        <dbReference type="Rhea" id="RHEA:24176"/>
        <dbReference type="Rhea" id="RHEA-COMP:10000"/>
        <dbReference type="Rhea" id="RHEA-COMP:10001"/>
        <dbReference type="Rhea" id="RHEA-COMP:13337"/>
        <dbReference type="Rhea" id="RHEA-COMP:13338"/>
        <dbReference type="Rhea" id="RHEA-COMP:13339"/>
        <dbReference type="Rhea" id="RHEA-COMP:13340"/>
        <dbReference type="ChEBI" id="CHEBI:15378"/>
        <dbReference type="ChEBI" id="CHEBI:29950"/>
        <dbReference type="ChEBI" id="CHEBI:30616"/>
        <dbReference type="ChEBI" id="CHEBI:33019"/>
        <dbReference type="ChEBI" id="CHEBI:33737"/>
        <dbReference type="ChEBI" id="CHEBI:33738"/>
        <dbReference type="ChEBI" id="CHEBI:61963"/>
        <dbReference type="ChEBI" id="CHEBI:65315"/>
        <dbReference type="ChEBI" id="CHEBI:136798"/>
        <dbReference type="ChEBI" id="CHEBI:456215"/>
        <dbReference type="EC" id="2.8.1.4"/>
    </reaction>
</comment>
<comment type="catalytic activity">
    <reaction evidence="1">
        <text>[ThiS sulfur-carrier protein]-C-terminal Gly-Gly-AMP + S-sulfanyl-L-cysteinyl-[cysteine desulfurase] + AH2 = [ThiS sulfur-carrier protein]-C-terminal-Gly-aminoethanethioate + L-cysteinyl-[cysteine desulfurase] + A + AMP + 2 H(+)</text>
        <dbReference type="Rhea" id="RHEA:43340"/>
        <dbReference type="Rhea" id="RHEA-COMP:12157"/>
        <dbReference type="Rhea" id="RHEA-COMP:12158"/>
        <dbReference type="Rhea" id="RHEA-COMP:12910"/>
        <dbReference type="Rhea" id="RHEA-COMP:19908"/>
        <dbReference type="ChEBI" id="CHEBI:13193"/>
        <dbReference type="ChEBI" id="CHEBI:15378"/>
        <dbReference type="ChEBI" id="CHEBI:17499"/>
        <dbReference type="ChEBI" id="CHEBI:29950"/>
        <dbReference type="ChEBI" id="CHEBI:61963"/>
        <dbReference type="ChEBI" id="CHEBI:90618"/>
        <dbReference type="ChEBI" id="CHEBI:232372"/>
        <dbReference type="ChEBI" id="CHEBI:456215"/>
    </reaction>
</comment>
<comment type="pathway">
    <text evidence="1">Cofactor biosynthesis; thiamine diphosphate biosynthesis.</text>
</comment>
<comment type="subcellular location">
    <subcellularLocation>
        <location evidence="1">Cytoplasm</location>
    </subcellularLocation>
</comment>
<comment type="similarity">
    <text evidence="1">Belongs to the ThiI family.</text>
</comment>
<sequence length="482" mass="55001">MKFIIKLFPEITIKSQSVRLRFIKILTGNIRNVLKHYDETLAVVRHWDNIEVRAKDENQRLAIRDALTRIPGIHHILEVEDVPFTDMHDIFEKALVQYRDQLEGKTFCVRVKRRGKHDFSSIDVERYVGGGLNQHIESARVKLTNPEVTVHLEVEDDRLLLIKGRYEGIGGFPIGTQEDVLSLISGGFDSGVSSYMLMRRGCRVHYCFFNLGGAAHEIGVRQVAHYLWNRFGSSHRVRFVAINFEPVVGEILEKIDDGQMGVILKRMMVRAASKVAERYGVQALVTGEALGQVSSQTLTNLRLIDNVSDTLILRPLISYDKEHIINLARQIGTEDFARTMPEYCGVISKSPTVKAVKSKIEAEEEKFDFSILDKVVEEANNVDIREIAQQTEQEVVEVETVNGFGPNDVILDIRSVDEQEDKPLKVEGIDVVSLPFYKLSTKFGDLDQNRTWLLWCERGVMSRLQALYLREQGFNNVKVYRP</sequence>
<organism>
    <name type="scientific">Escherichia coli O9:H4 (strain HS)</name>
    <dbReference type="NCBI Taxonomy" id="331112"/>
    <lineage>
        <taxon>Bacteria</taxon>
        <taxon>Pseudomonadati</taxon>
        <taxon>Pseudomonadota</taxon>
        <taxon>Gammaproteobacteria</taxon>
        <taxon>Enterobacterales</taxon>
        <taxon>Enterobacteriaceae</taxon>
        <taxon>Escherichia</taxon>
    </lineage>
</organism>
<name>THII_ECOHS</name>